<protein>
    <recommendedName>
        <fullName evidence="1">ATP-dependent 6-phosphofructokinase isozyme 1</fullName>
        <shortName evidence="1">ATP-PFK 1</shortName>
        <shortName evidence="1">Phosphofructokinase 1</shortName>
        <ecNumber evidence="1">2.7.1.11</ecNumber>
    </recommendedName>
    <alternativeName>
        <fullName>6-phosphofructokinase isozyme I</fullName>
    </alternativeName>
    <alternativeName>
        <fullName evidence="1">Phosphohexokinase 1</fullName>
    </alternativeName>
</protein>
<accession>B1XB82</accession>
<reference key="1">
    <citation type="journal article" date="2008" name="J. Bacteriol.">
        <title>The complete genome sequence of Escherichia coli DH10B: insights into the biology of a laboratory workhorse.</title>
        <authorList>
            <person name="Durfee T."/>
            <person name="Nelson R."/>
            <person name="Baldwin S."/>
            <person name="Plunkett G. III"/>
            <person name="Burland V."/>
            <person name="Mau B."/>
            <person name="Petrosino J.F."/>
            <person name="Qin X."/>
            <person name="Muzny D.M."/>
            <person name="Ayele M."/>
            <person name="Gibbs R.A."/>
            <person name="Csorgo B."/>
            <person name="Posfai G."/>
            <person name="Weinstock G.M."/>
            <person name="Blattner F.R."/>
        </authorList>
    </citation>
    <scope>NUCLEOTIDE SEQUENCE [LARGE SCALE GENOMIC DNA]</scope>
    <source>
        <strain>K12 / DH10B</strain>
    </source>
</reference>
<organism>
    <name type="scientific">Escherichia coli (strain K12 / DH10B)</name>
    <dbReference type="NCBI Taxonomy" id="316385"/>
    <lineage>
        <taxon>Bacteria</taxon>
        <taxon>Pseudomonadati</taxon>
        <taxon>Pseudomonadota</taxon>
        <taxon>Gammaproteobacteria</taxon>
        <taxon>Enterobacterales</taxon>
        <taxon>Enterobacteriaceae</taxon>
        <taxon>Escherichia</taxon>
    </lineage>
</organism>
<evidence type="ECO:0000255" key="1">
    <source>
        <dbReference type="HAMAP-Rule" id="MF_00339"/>
    </source>
</evidence>
<dbReference type="EC" id="2.7.1.11" evidence="1"/>
<dbReference type="EMBL" id="CP000948">
    <property type="protein sequence ID" value="ACB04928.1"/>
    <property type="molecule type" value="Genomic_DNA"/>
</dbReference>
<dbReference type="RefSeq" id="WP_000591795.1">
    <property type="nucleotide sequence ID" value="NC_010473.1"/>
</dbReference>
<dbReference type="SMR" id="B1XB82"/>
<dbReference type="GeneID" id="93777982"/>
<dbReference type="KEGG" id="ecd:ECDH10B_4105"/>
<dbReference type="HOGENOM" id="CLU_020655_0_1_6"/>
<dbReference type="UniPathway" id="UPA00109">
    <property type="reaction ID" value="UER00182"/>
</dbReference>
<dbReference type="GO" id="GO:0005945">
    <property type="term" value="C:6-phosphofructokinase complex"/>
    <property type="evidence" value="ECO:0007669"/>
    <property type="project" value="TreeGrafter"/>
</dbReference>
<dbReference type="GO" id="GO:0003872">
    <property type="term" value="F:6-phosphofructokinase activity"/>
    <property type="evidence" value="ECO:0007669"/>
    <property type="project" value="UniProtKB-UniRule"/>
</dbReference>
<dbReference type="GO" id="GO:0016208">
    <property type="term" value="F:AMP binding"/>
    <property type="evidence" value="ECO:0007669"/>
    <property type="project" value="TreeGrafter"/>
</dbReference>
<dbReference type="GO" id="GO:0005524">
    <property type="term" value="F:ATP binding"/>
    <property type="evidence" value="ECO:0007669"/>
    <property type="project" value="UniProtKB-KW"/>
</dbReference>
<dbReference type="GO" id="GO:0070095">
    <property type="term" value="F:fructose-6-phosphate binding"/>
    <property type="evidence" value="ECO:0007669"/>
    <property type="project" value="TreeGrafter"/>
</dbReference>
<dbReference type="GO" id="GO:0042802">
    <property type="term" value="F:identical protein binding"/>
    <property type="evidence" value="ECO:0007669"/>
    <property type="project" value="TreeGrafter"/>
</dbReference>
<dbReference type="GO" id="GO:0046872">
    <property type="term" value="F:metal ion binding"/>
    <property type="evidence" value="ECO:0007669"/>
    <property type="project" value="UniProtKB-KW"/>
</dbReference>
<dbReference type="GO" id="GO:0048029">
    <property type="term" value="F:monosaccharide binding"/>
    <property type="evidence" value="ECO:0007669"/>
    <property type="project" value="TreeGrafter"/>
</dbReference>
<dbReference type="GO" id="GO:0061621">
    <property type="term" value="P:canonical glycolysis"/>
    <property type="evidence" value="ECO:0007669"/>
    <property type="project" value="TreeGrafter"/>
</dbReference>
<dbReference type="GO" id="GO:0030388">
    <property type="term" value="P:fructose 1,6-bisphosphate metabolic process"/>
    <property type="evidence" value="ECO:0007669"/>
    <property type="project" value="TreeGrafter"/>
</dbReference>
<dbReference type="GO" id="GO:0006002">
    <property type="term" value="P:fructose 6-phosphate metabolic process"/>
    <property type="evidence" value="ECO:0007669"/>
    <property type="project" value="InterPro"/>
</dbReference>
<dbReference type="CDD" id="cd00763">
    <property type="entry name" value="Bacterial_PFK"/>
    <property type="match status" value="1"/>
</dbReference>
<dbReference type="FunFam" id="3.40.50.450:FF:000001">
    <property type="entry name" value="ATP-dependent 6-phosphofructokinase"/>
    <property type="match status" value="1"/>
</dbReference>
<dbReference type="FunFam" id="3.40.50.460:FF:000002">
    <property type="entry name" value="ATP-dependent 6-phosphofructokinase"/>
    <property type="match status" value="1"/>
</dbReference>
<dbReference type="Gene3D" id="3.40.50.450">
    <property type="match status" value="1"/>
</dbReference>
<dbReference type="Gene3D" id="3.40.50.460">
    <property type="entry name" value="Phosphofructokinase domain"/>
    <property type="match status" value="1"/>
</dbReference>
<dbReference type="HAMAP" id="MF_00339">
    <property type="entry name" value="Phosphofructokinase_I_B1"/>
    <property type="match status" value="1"/>
</dbReference>
<dbReference type="InterPro" id="IPR022953">
    <property type="entry name" value="ATP_PFK"/>
</dbReference>
<dbReference type="InterPro" id="IPR012003">
    <property type="entry name" value="ATP_PFK_prok-type"/>
</dbReference>
<dbReference type="InterPro" id="IPR012828">
    <property type="entry name" value="PFKA_ATP_prok"/>
</dbReference>
<dbReference type="InterPro" id="IPR015912">
    <property type="entry name" value="Phosphofructokinase_CS"/>
</dbReference>
<dbReference type="InterPro" id="IPR000023">
    <property type="entry name" value="Phosphofructokinase_dom"/>
</dbReference>
<dbReference type="InterPro" id="IPR035966">
    <property type="entry name" value="PKF_sf"/>
</dbReference>
<dbReference type="NCBIfam" id="TIGR02482">
    <property type="entry name" value="PFKA_ATP"/>
    <property type="match status" value="1"/>
</dbReference>
<dbReference type="NCBIfam" id="NF002872">
    <property type="entry name" value="PRK03202.1"/>
    <property type="match status" value="1"/>
</dbReference>
<dbReference type="PANTHER" id="PTHR13697:SF4">
    <property type="entry name" value="ATP-DEPENDENT 6-PHOSPHOFRUCTOKINASE"/>
    <property type="match status" value="1"/>
</dbReference>
<dbReference type="PANTHER" id="PTHR13697">
    <property type="entry name" value="PHOSPHOFRUCTOKINASE"/>
    <property type="match status" value="1"/>
</dbReference>
<dbReference type="Pfam" id="PF00365">
    <property type="entry name" value="PFK"/>
    <property type="match status" value="1"/>
</dbReference>
<dbReference type="PIRSF" id="PIRSF000532">
    <property type="entry name" value="ATP_PFK_prok"/>
    <property type="match status" value="1"/>
</dbReference>
<dbReference type="PRINTS" id="PR00476">
    <property type="entry name" value="PHFRCTKINASE"/>
</dbReference>
<dbReference type="SUPFAM" id="SSF53784">
    <property type="entry name" value="Phosphofructokinase"/>
    <property type="match status" value="1"/>
</dbReference>
<dbReference type="PROSITE" id="PS00433">
    <property type="entry name" value="PHOSPHOFRUCTOKINASE"/>
    <property type="match status" value="1"/>
</dbReference>
<comment type="function">
    <text evidence="1">Catalyzes the phosphorylation of D-fructose 6-phosphate to fructose 1,6-bisphosphate by ATP, the first committing step of glycolysis.</text>
</comment>
<comment type="catalytic activity">
    <reaction evidence="1">
        <text>beta-D-fructose 6-phosphate + ATP = beta-D-fructose 1,6-bisphosphate + ADP + H(+)</text>
        <dbReference type="Rhea" id="RHEA:16109"/>
        <dbReference type="ChEBI" id="CHEBI:15378"/>
        <dbReference type="ChEBI" id="CHEBI:30616"/>
        <dbReference type="ChEBI" id="CHEBI:32966"/>
        <dbReference type="ChEBI" id="CHEBI:57634"/>
        <dbReference type="ChEBI" id="CHEBI:456216"/>
        <dbReference type="EC" id="2.7.1.11"/>
    </reaction>
</comment>
<comment type="cofactor">
    <cofactor evidence="1">
        <name>Mg(2+)</name>
        <dbReference type="ChEBI" id="CHEBI:18420"/>
    </cofactor>
</comment>
<comment type="activity regulation">
    <text evidence="1">Allosterically activated by ADP and other diphosphonucleosides, and allosterically inhibited by phosphoenolpyruvate.</text>
</comment>
<comment type="pathway">
    <text evidence="1">Carbohydrate degradation; glycolysis; D-glyceraldehyde 3-phosphate and glycerone phosphate from D-glucose: step 3/4.</text>
</comment>
<comment type="subunit">
    <text evidence="1">Homotetramer.</text>
</comment>
<comment type="subcellular location">
    <subcellularLocation>
        <location evidence="1">Cytoplasm</location>
    </subcellularLocation>
</comment>
<comment type="similarity">
    <text evidence="1">Belongs to the phosphofructokinase type A (PFKA) family. ATP-dependent PFK group I subfamily. Prokaryotic clade 'B1' sub-subfamily.</text>
</comment>
<proteinExistence type="inferred from homology"/>
<feature type="chain" id="PRO_1000120040" description="ATP-dependent 6-phosphofructokinase isozyme 1">
    <location>
        <begin position="1"/>
        <end position="320"/>
    </location>
</feature>
<feature type="active site" description="Proton acceptor" evidence="1">
    <location>
        <position position="128"/>
    </location>
</feature>
<feature type="binding site" evidence="1">
    <location>
        <position position="12"/>
    </location>
    <ligand>
        <name>ATP</name>
        <dbReference type="ChEBI" id="CHEBI:30616"/>
    </ligand>
</feature>
<feature type="binding site" evidence="1">
    <location>
        <begin position="22"/>
        <end position="26"/>
    </location>
    <ligand>
        <name>ADP</name>
        <dbReference type="ChEBI" id="CHEBI:456216"/>
        <note>allosteric activator; ligand shared between dimeric partners</note>
    </ligand>
</feature>
<feature type="binding site" evidence="1">
    <location>
        <begin position="55"/>
        <end position="60"/>
    </location>
    <ligand>
        <name>ADP</name>
        <dbReference type="ChEBI" id="CHEBI:456216"/>
        <note>allosteric activator; ligand shared between dimeric partners</note>
    </ligand>
</feature>
<feature type="binding site" evidence="1">
    <location>
        <begin position="73"/>
        <end position="74"/>
    </location>
    <ligand>
        <name>ATP</name>
        <dbReference type="ChEBI" id="CHEBI:30616"/>
    </ligand>
</feature>
<feature type="binding site" evidence="1">
    <location>
        <begin position="103"/>
        <end position="106"/>
    </location>
    <ligand>
        <name>ATP</name>
        <dbReference type="ChEBI" id="CHEBI:30616"/>
    </ligand>
</feature>
<feature type="binding site" evidence="1">
    <location>
        <position position="104"/>
    </location>
    <ligand>
        <name>Mg(2+)</name>
        <dbReference type="ChEBI" id="CHEBI:18420"/>
        <note>catalytic</note>
    </ligand>
</feature>
<feature type="binding site" description="in other chain" evidence="1">
    <location>
        <begin position="126"/>
        <end position="128"/>
    </location>
    <ligand>
        <name>substrate</name>
        <note>ligand shared between dimeric partners</note>
    </ligand>
</feature>
<feature type="binding site" description="in other chain" evidence="1">
    <location>
        <position position="155"/>
    </location>
    <ligand>
        <name>ADP</name>
        <dbReference type="ChEBI" id="CHEBI:456216"/>
        <note>allosteric activator; ligand shared between dimeric partners</note>
    </ligand>
</feature>
<feature type="binding site" evidence="1">
    <location>
        <position position="163"/>
    </location>
    <ligand>
        <name>substrate</name>
        <note>ligand shared between dimeric partners</note>
    </ligand>
</feature>
<feature type="binding site" description="in other chain" evidence="1">
    <location>
        <begin position="170"/>
        <end position="172"/>
    </location>
    <ligand>
        <name>substrate</name>
        <note>ligand shared between dimeric partners</note>
    </ligand>
</feature>
<feature type="binding site" description="in other chain" evidence="1">
    <location>
        <begin position="186"/>
        <end position="188"/>
    </location>
    <ligand>
        <name>ADP</name>
        <dbReference type="ChEBI" id="CHEBI:456216"/>
        <note>allosteric activator; ligand shared between dimeric partners</note>
    </ligand>
</feature>
<feature type="binding site" description="in other chain" evidence="1">
    <location>
        <position position="212"/>
    </location>
    <ligand>
        <name>ADP</name>
        <dbReference type="ChEBI" id="CHEBI:456216"/>
        <note>allosteric activator; ligand shared between dimeric partners</note>
    </ligand>
</feature>
<feature type="binding site" description="in other chain" evidence="1">
    <location>
        <begin position="214"/>
        <end position="216"/>
    </location>
    <ligand>
        <name>ADP</name>
        <dbReference type="ChEBI" id="CHEBI:456216"/>
        <note>allosteric activator; ligand shared between dimeric partners</note>
    </ligand>
</feature>
<feature type="binding site" description="in other chain" evidence="1">
    <location>
        <position position="223"/>
    </location>
    <ligand>
        <name>substrate</name>
        <note>ligand shared between dimeric partners</note>
    </ligand>
</feature>
<feature type="binding site" evidence="1">
    <location>
        <position position="244"/>
    </location>
    <ligand>
        <name>substrate</name>
        <note>ligand shared between dimeric partners</note>
    </ligand>
</feature>
<feature type="binding site" description="in other chain" evidence="1">
    <location>
        <begin position="250"/>
        <end position="253"/>
    </location>
    <ligand>
        <name>substrate</name>
        <note>ligand shared between dimeric partners</note>
    </ligand>
</feature>
<keyword id="KW-0021">Allosteric enzyme</keyword>
<keyword id="KW-0067">ATP-binding</keyword>
<keyword id="KW-0963">Cytoplasm</keyword>
<keyword id="KW-0324">Glycolysis</keyword>
<keyword id="KW-0418">Kinase</keyword>
<keyword id="KW-0460">Magnesium</keyword>
<keyword id="KW-0479">Metal-binding</keyword>
<keyword id="KW-0547">Nucleotide-binding</keyword>
<keyword id="KW-0808">Transferase</keyword>
<sequence>MIKKIGVLTSGGDAPGMNAAIRGVVRSALTEGLEVMGIYDGYLGLYEDRMVQLDRYSVSDMINRGGTFLGSARFPEFRDENIRAVAIENLKKRGIDALVVIGGDGSYMGAMRLTEMGFPCIGLPGTIDNDIKGTDYTIGFFTALSTVVEAIDRLRDTSSSHQRISVVEVMGRYCGDLTLAAAIAGGCEFVVVPEVEFSREDLVNEIKAGIAKGKKHAIVAITEHMCDVDELAHFIEKETGRETRATVLGHIQRGGSPVPYDRILASRMGAYAIDLLLAGYGGRCVGIQNEQLVHHDIIDAIENMKRPFKGDWLDCAKKLY</sequence>
<name>PFKA_ECODH</name>
<gene>
    <name evidence="1" type="primary">pfkA</name>
    <name type="ordered locus">ECDH10B_4105</name>
</gene>